<dbReference type="EMBL" id="CR382134">
    <property type="protein sequence ID" value="CAG85025.1"/>
    <property type="molecule type" value="Genomic_DNA"/>
</dbReference>
<dbReference type="RefSeq" id="XP_457039.1">
    <property type="nucleotide sequence ID" value="XM_457039.1"/>
</dbReference>
<dbReference type="SMR" id="Q6BXN0"/>
<dbReference type="FunCoup" id="Q6BXN0">
    <property type="interactions" value="383"/>
</dbReference>
<dbReference type="STRING" id="284592.Q6BXN0"/>
<dbReference type="GeneID" id="2913692"/>
<dbReference type="KEGG" id="dha:DEHA2B01694g"/>
<dbReference type="VEuPathDB" id="FungiDB:DEHA2B01694g"/>
<dbReference type="eggNOG" id="KOG0679">
    <property type="taxonomic scope" value="Eukaryota"/>
</dbReference>
<dbReference type="HOGENOM" id="CLU_027965_6_2_1"/>
<dbReference type="InParanoid" id="Q6BXN0"/>
<dbReference type="OMA" id="MWLSRQE"/>
<dbReference type="OrthoDB" id="5132116at2759"/>
<dbReference type="Proteomes" id="UP000000599">
    <property type="component" value="Chromosome B"/>
</dbReference>
<dbReference type="GO" id="GO:0031011">
    <property type="term" value="C:Ino80 complex"/>
    <property type="evidence" value="ECO:0007669"/>
    <property type="project" value="EnsemblFungi"/>
</dbReference>
<dbReference type="GO" id="GO:0035267">
    <property type="term" value="C:NuA4 histone acetyltransferase complex"/>
    <property type="evidence" value="ECO:0007669"/>
    <property type="project" value="EnsemblFungi"/>
</dbReference>
<dbReference type="GO" id="GO:0000812">
    <property type="term" value="C:Swr1 complex"/>
    <property type="evidence" value="ECO:0007669"/>
    <property type="project" value="EnsemblFungi"/>
</dbReference>
<dbReference type="GO" id="GO:0005524">
    <property type="term" value="F:ATP binding"/>
    <property type="evidence" value="ECO:0007669"/>
    <property type="project" value="EnsemblFungi"/>
</dbReference>
<dbReference type="GO" id="GO:0003682">
    <property type="term" value="F:chromatin binding"/>
    <property type="evidence" value="ECO:0007669"/>
    <property type="project" value="EnsemblFungi"/>
</dbReference>
<dbReference type="GO" id="GO:0042393">
    <property type="term" value="F:histone binding"/>
    <property type="evidence" value="ECO:0007669"/>
    <property type="project" value="EnsemblFungi"/>
</dbReference>
<dbReference type="GO" id="GO:0006338">
    <property type="term" value="P:chromatin remodeling"/>
    <property type="evidence" value="ECO:0007669"/>
    <property type="project" value="EnsemblFungi"/>
</dbReference>
<dbReference type="GO" id="GO:0006281">
    <property type="term" value="P:DNA repair"/>
    <property type="evidence" value="ECO:0007669"/>
    <property type="project" value="UniProtKB-KW"/>
</dbReference>
<dbReference type="GO" id="GO:0051382">
    <property type="term" value="P:kinetochore assembly"/>
    <property type="evidence" value="ECO:0007669"/>
    <property type="project" value="EnsemblFungi"/>
</dbReference>
<dbReference type="GO" id="GO:0006357">
    <property type="term" value="P:regulation of transcription by RNA polymerase II"/>
    <property type="evidence" value="ECO:0007669"/>
    <property type="project" value="EnsemblFungi"/>
</dbReference>
<dbReference type="CDD" id="cd13395">
    <property type="entry name" value="ASKHA_NBD_Arp4_ACTL6-like"/>
    <property type="match status" value="1"/>
</dbReference>
<dbReference type="FunFam" id="3.30.420.40:FF:000203">
    <property type="entry name" value="Actin-related protein 4"/>
    <property type="match status" value="1"/>
</dbReference>
<dbReference type="FunFam" id="3.30.420.40:FF:000058">
    <property type="entry name" value="Putative actin-related protein 5"/>
    <property type="match status" value="1"/>
</dbReference>
<dbReference type="Gene3D" id="3.30.420.40">
    <property type="match status" value="3"/>
</dbReference>
<dbReference type="Gene3D" id="3.90.640.10">
    <property type="entry name" value="Actin, Chain A, domain 4"/>
    <property type="match status" value="1"/>
</dbReference>
<dbReference type="InterPro" id="IPR004000">
    <property type="entry name" value="Actin"/>
</dbReference>
<dbReference type="InterPro" id="IPR004001">
    <property type="entry name" value="Actin_CS"/>
</dbReference>
<dbReference type="InterPro" id="IPR043129">
    <property type="entry name" value="ATPase_NBD"/>
</dbReference>
<dbReference type="PANTHER" id="PTHR11937">
    <property type="entry name" value="ACTIN"/>
    <property type="match status" value="1"/>
</dbReference>
<dbReference type="Pfam" id="PF00022">
    <property type="entry name" value="Actin"/>
    <property type="match status" value="1"/>
</dbReference>
<dbReference type="SMART" id="SM00268">
    <property type="entry name" value="ACTIN"/>
    <property type="match status" value="1"/>
</dbReference>
<dbReference type="SUPFAM" id="SSF53067">
    <property type="entry name" value="Actin-like ATPase domain"/>
    <property type="match status" value="2"/>
</dbReference>
<dbReference type="PROSITE" id="PS00432">
    <property type="entry name" value="ACTINS_2"/>
    <property type="match status" value="1"/>
</dbReference>
<feature type="chain" id="PRO_0000089095" description="Actin-related protein 4">
    <location>
        <begin position="1"/>
        <end position="492"/>
    </location>
</feature>
<feature type="region of interest" description="Disordered" evidence="2">
    <location>
        <begin position="48"/>
        <end position="67"/>
    </location>
</feature>
<feature type="region of interest" description="Disordered" evidence="2">
    <location>
        <begin position="331"/>
        <end position="350"/>
    </location>
</feature>
<feature type="region of interest" description="Disordered" evidence="2">
    <location>
        <begin position="359"/>
        <end position="384"/>
    </location>
</feature>
<keyword id="KW-0010">Activator</keyword>
<keyword id="KW-0156">Chromatin regulator</keyword>
<keyword id="KW-0227">DNA damage</keyword>
<keyword id="KW-0234">DNA repair</keyword>
<keyword id="KW-0539">Nucleus</keyword>
<keyword id="KW-1185">Reference proteome</keyword>
<keyword id="KW-0804">Transcription</keyword>
<keyword id="KW-0805">Transcription regulation</keyword>
<protein>
    <recommendedName>
        <fullName>Actin-related protein 4</fullName>
    </recommendedName>
    <alternativeName>
        <fullName>Actin-like protein ARP4</fullName>
        <shortName>Actin-like protein 4</shortName>
    </alternativeName>
</protein>
<organism>
    <name type="scientific">Debaryomyces hansenii (strain ATCC 36239 / CBS 767 / BCRC 21394 / JCM 1990 / NBRC 0083 / IGC 2968)</name>
    <name type="common">Yeast</name>
    <name type="synonym">Torulaspora hansenii</name>
    <dbReference type="NCBI Taxonomy" id="284592"/>
    <lineage>
        <taxon>Eukaryota</taxon>
        <taxon>Fungi</taxon>
        <taxon>Dikarya</taxon>
        <taxon>Ascomycota</taxon>
        <taxon>Saccharomycotina</taxon>
        <taxon>Pichiomycetes</taxon>
        <taxon>Debaryomycetaceae</taxon>
        <taxon>Debaryomyces</taxon>
    </lineage>
</organism>
<proteinExistence type="inferred from homology"/>
<comment type="function">
    <text evidence="1">Chromatin interaction component of the NuA4 histone acetyltransferase complex which is involved in transcriptional activation of selected genes principally by acetylation of nucleosomal histone H4 and H2A. The NuA4 complex is also involved in DNA repair. Is required for NuA4 complex integrity. Component of the SWR1 complex which mediates the ATP-dependent exchange of histone H2A for the H2A variant HZT1 leading to transcriptional regulation of selected genes by chromatin remodeling. Component of the INO80 complex which remodels chromatin by shifting nucleosomes and is involved in DNA repair (By similarity).</text>
</comment>
<comment type="subunit">
    <text evidence="1">Component of the NuA4 histone acetyltransferase complex, of the INO80 chromatin remodeling complex, and of the SWR1 chromatin remodeling complex.</text>
</comment>
<comment type="subcellular location">
    <subcellularLocation>
        <location evidence="1">Nucleus</location>
    </subcellularLocation>
</comment>
<comment type="similarity">
    <text evidence="3">Belongs to the actin family. ARP4 subfamily.</text>
</comment>
<gene>
    <name type="primary">ARP4</name>
    <name type="ordered locus">DEHA2B01694g</name>
</gene>
<reference key="1">
    <citation type="journal article" date="2004" name="Nature">
        <title>Genome evolution in yeasts.</title>
        <authorList>
            <person name="Dujon B."/>
            <person name="Sherman D."/>
            <person name="Fischer G."/>
            <person name="Durrens P."/>
            <person name="Casaregola S."/>
            <person name="Lafontaine I."/>
            <person name="de Montigny J."/>
            <person name="Marck C."/>
            <person name="Neuveglise C."/>
            <person name="Talla E."/>
            <person name="Goffard N."/>
            <person name="Frangeul L."/>
            <person name="Aigle M."/>
            <person name="Anthouard V."/>
            <person name="Babour A."/>
            <person name="Barbe V."/>
            <person name="Barnay S."/>
            <person name="Blanchin S."/>
            <person name="Beckerich J.-M."/>
            <person name="Beyne E."/>
            <person name="Bleykasten C."/>
            <person name="Boisrame A."/>
            <person name="Boyer J."/>
            <person name="Cattolico L."/>
            <person name="Confanioleri F."/>
            <person name="de Daruvar A."/>
            <person name="Despons L."/>
            <person name="Fabre E."/>
            <person name="Fairhead C."/>
            <person name="Ferry-Dumazet H."/>
            <person name="Groppi A."/>
            <person name="Hantraye F."/>
            <person name="Hennequin C."/>
            <person name="Jauniaux N."/>
            <person name="Joyet P."/>
            <person name="Kachouri R."/>
            <person name="Kerrest A."/>
            <person name="Koszul R."/>
            <person name="Lemaire M."/>
            <person name="Lesur I."/>
            <person name="Ma L."/>
            <person name="Muller H."/>
            <person name="Nicaud J.-M."/>
            <person name="Nikolski M."/>
            <person name="Oztas S."/>
            <person name="Ozier-Kalogeropoulos O."/>
            <person name="Pellenz S."/>
            <person name="Potier S."/>
            <person name="Richard G.-F."/>
            <person name="Straub M.-L."/>
            <person name="Suleau A."/>
            <person name="Swennen D."/>
            <person name="Tekaia F."/>
            <person name="Wesolowski-Louvel M."/>
            <person name="Westhof E."/>
            <person name="Wirth B."/>
            <person name="Zeniou-Meyer M."/>
            <person name="Zivanovic Y."/>
            <person name="Bolotin-Fukuhara M."/>
            <person name="Thierry A."/>
            <person name="Bouchier C."/>
            <person name="Caudron B."/>
            <person name="Scarpelli C."/>
            <person name="Gaillardin C."/>
            <person name="Weissenbach J."/>
            <person name="Wincker P."/>
            <person name="Souciet J.-L."/>
        </authorList>
    </citation>
    <scope>NUCLEOTIDE SEQUENCE [LARGE SCALE GENOMIC DNA]</scope>
    <source>
        <strain>ATCC 36239 / CBS 767 / BCRC 21394 / JCM 1990 / NBRC 0083 / IGC 2968</strain>
    </source>
</reference>
<name>ARP4_DEBHA</name>
<sequence>MSSSGNNASVYGGDEINAIVLDSSSFHTRIGYAGDDFPKIITPSSYASPNEDAMELDNKKKNGKSKSSKIFGESINIPRSNHNVSPILKDSVIIDWEAAIEQYHYYFDDVLTLNYKEQPILITEPVWCTPQYRQTLLETFYENFDFPALFLAKSPTCISFQQGRPNCLVVDIGHDSVSVTPVIDGISLLKNSMKTNYGGQYLNDQIEDMLTHKFSGVNFENRYRIKSKTPTVYPEESKYTVRDLSENITQSFDDYQRQNIWHEFKETMLEVPEKKFNTSNTSQANSLKEIYSQDSNKRLFELPTGQSLELCLERFQLADSLFDPQSYKFNNPDLATKYPPSNGELSLTNSYDDYKPLKRARKAESNQSTPPPSDAKKPSSKTSQIRGLTHLITHTLSTIDIDLRSSVAHNIIVTGGVSLIPQLTERLYSELSNSNPGLKIRLHAVGNSSERFNQAWIGGSVLASLGTFHQMWVSKQEYEEAGAERILNQRFR</sequence>
<accession>Q6BXN0</accession>
<evidence type="ECO:0000250" key="1"/>
<evidence type="ECO:0000256" key="2">
    <source>
        <dbReference type="SAM" id="MobiDB-lite"/>
    </source>
</evidence>
<evidence type="ECO:0000305" key="3"/>